<accession>P03449</accession>
<accession>Q3YPZ5</accession>
<dbReference type="EMBL" id="J02132">
    <property type="protein sequence ID" value="AAA43187.1"/>
    <property type="molecule type" value="Genomic_RNA"/>
</dbReference>
<dbReference type="EMBL" id="CY002496">
    <property type="protein sequence ID" value="AAZ80007.1"/>
    <property type="molecule type" value="Genomic_RNA"/>
</dbReference>
<dbReference type="SMR" id="P03449"/>
<dbReference type="GlyCosmos" id="P03449">
    <property type="glycosylation" value="7 sites, No reported glycans"/>
</dbReference>
<dbReference type="Proteomes" id="UP000154307">
    <property type="component" value="Genome"/>
</dbReference>
<dbReference type="GO" id="GO:0020002">
    <property type="term" value="C:host cell plasma membrane"/>
    <property type="evidence" value="ECO:0007669"/>
    <property type="project" value="UniProtKB-SubCell"/>
</dbReference>
<dbReference type="GO" id="GO:0016020">
    <property type="term" value="C:membrane"/>
    <property type="evidence" value="ECO:0007669"/>
    <property type="project" value="UniProtKB-UniRule"/>
</dbReference>
<dbReference type="GO" id="GO:0019031">
    <property type="term" value="C:viral envelope"/>
    <property type="evidence" value="ECO:0007669"/>
    <property type="project" value="UniProtKB-UniRule"/>
</dbReference>
<dbReference type="GO" id="GO:0055036">
    <property type="term" value="C:virion membrane"/>
    <property type="evidence" value="ECO:0007669"/>
    <property type="project" value="UniProtKB-SubCell"/>
</dbReference>
<dbReference type="GO" id="GO:0046789">
    <property type="term" value="F:host cell surface receptor binding"/>
    <property type="evidence" value="ECO:0007669"/>
    <property type="project" value="UniProtKB-UniRule"/>
</dbReference>
<dbReference type="GO" id="GO:0075512">
    <property type="term" value="P:clathrin-dependent endocytosis of virus by host cell"/>
    <property type="evidence" value="ECO:0007669"/>
    <property type="project" value="UniProtKB-UniRule"/>
</dbReference>
<dbReference type="GO" id="GO:0039654">
    <property type="term" value="P:fusion of virus membrane with host endosome membrane"/>
    <property type="evidence" value="ECO:0007669"/>
    <property type="project" value="UniProtKB-UniRule"/>
</dbReference>
<dbReference type="GO" id="GO:0019064">
    <property type="term" value="P:fusion of virus membrane with host plasma membrane"/>
    <property type="evidence" value="ECO:0007669"/>
    <property type="project" value="InterPro"/>
</dbReference>
<dbReference type="GO" id="GO:0046761">
    <property type="term" value="P:viral budding from plasma membrane"/>
    <property type="evidence" value="ECO:0007669"/>
    <property type="project" value="UniProtKB-UniRule"/>
</dbReference>
<dbReference type="GO" id="GO:0019062">
    <property type="term" value="P:virion attachment to host cell"/>
    <property type="evidence" value="ECO:0007669"/>
    <property type="project" value="UniProtKB-KW"/>
</dbReference>
<dbReference type="FunFam" id="3.90.20.10:FF:000001">
    <property type="entry name" value="Hemagglutinin"/>
    <property type="match status" value="1"/>
</dbReference>
<dbReference type="FunFam" id="3.90.209.20:FF:000001">
    <property type="entry name" value="Hemagglutinin"/>
    <property type="match status" value="1"/>
</dbReference>
<dbReference type="Gene3D" id="3.90.20.10">
    <property type="match status" value="1"/>
</dbReference>
<dbReference type="Gene3D" id="3.90.209.20">
    <property type="match status" value="1"/>
</dbReference>
<dbReference type="HAMAP" id="MF_04072">
    <property type="entry name" value="INFV_HEMA"/>
    <property type="match status" value="1"/>
</dbReference>
<dbReference type="InterPro" id="IPR008980">
    <property type="entry name" value="Capsid_hemagglutn"/>
</dbReference>
<dbReference type="InterPro" id="IPR013828">
    <property type="entry name" value="Hemagglutn_HA1_a/b_dom_sf"/>
</dbReference>
<dbReference type="InterPro" id="IPR000149">
    <property type="entry name" value="Hemagglutn_influenz_A"/>
</dbReference>
<dbReference type="InterPro" id="IPR001364">
    <property type="entry name" value="Hemagglutn_influenz_A/B"/>
</dbReference>
<dbReference type="Pfam" id="PF00509">
    <property type="entry name" value="Hemagglutinin"/>
    <property type="match status" value="1"/>
</dbReference>
<dbReference type="PRINTS" id="PR00330">
    <property type="entry name" value="HEMAGGLUTN1"/>
</dbReference>
<dbReference type="PRINTS" id="PR00329">
    <property type="entry name" value="HEMAGGLUTN12"/>
</dbReference>
<dbReference type="SUPFAM" id="SSF58064">
    <property type="entry name" value="Influenza hemagglutinin (stalk)"/>
    <property type="match status" value="1"/>
</dbReference>
<dbReference type="SUPFAM" id="SSF49818">
    <property type="entry name" value="Viral protein domain"/>
    <property type="match status" value="1"/>
</dbReference>
<keyword id="KW-1167">Clathrin- and caveolin-independent endocytosis of virus by host</keyword>
<keyword id="KW-1165">Clathrin-mediated endocytosis of virus by host</keyword>
<keyword id="KW-1015">Disulfide bond</keyword>
<keyword id="KW-1170">Fusion of virus membrane with host endosomal membrane</keyword>
<keyword id="KW-1168">Fusion of virus membrane with host membrane</keyword>
<keyword id="KW-0325">Glycoprotein</keyword>
<keyword id="KW-0348">Hemagglutinin</keyword>
<keyword id="KW-1032">Host cell membrane</keyword>
<keyword id="KW-1043">Host membrane</keyword>
<keyword id="KW-0945">Host-virus interaction</keyword>
<keyword id="KW-0449">Lipoprotein</keyword>
<keyword id="KW-0472">Membrane</keyword>
<keyword id="KW-0564">Palmitate</keyword>
<keyword id="KW-0732">Signal</keyword>
<keyword id="KW-0812">Transmembrane</keyword>
<keyword id="KW-1133">Transmembrane helix</keyword>
<keyword id="KW-1161">Viral attachment to host cell</keyword>
<keyword id="KW-0261">Viral envelope protein</keyword>
<keyword id="KW-1162">Viral penetration into host cytoplasm</keyword>
<keyword id="KW-0946">Virion</keyword>
<keyword id="KW-1164">Virus endocytosis by host</keyword>
<keyword id="KW-1160">Virus entry into host cell</keyword>
<proteinExistence type="inferred from homology"/>
<evidence type="ECO:0000255" key="1">
    <source>
        <dbReference type="HAMAP-Rule" id="MF_04072"/>
    </source>
</evidence>
<evidence type="ECO:0000305" key="2"/>
<name>HEMA_I71A1</name>
<comment type="function">
    <text>Binds to sialic acid-containing receptors on the cell surface, bringing about the attachment of the virus particle to the cell. This attachment induces virion internalization of about two third of the virus particles through clathrin-dependent endocytosis and about one third through a clathrin- and caveolin-independent pathway. Plays a major role in the determination of host range restriction and virulence. Class I viral fusion protein. Responsible for penetration of the virus into the cell cytoplasm by mediating the fusion of the membrane of the endocytosed virus particle with the endosomal membrane. Low pH in endosomes induces an irreversible conformational change in HA2, releasing the fusion hydrophobic peptide. Several trimers are required to form a competent fusion pore.</text>
</comment>
<comment type="function">
    <text evidence="1">Binds to sialic acid-containing receptors on the cell surface, bringing about the attachment of the virus particle to the cell. This attachment induces virion internalization either through clathrin-dependent endocytosis or through clathrin- and caveolin-independent pathway. Plays a major role in the determination of host range restriction and virulence. Class I viral fusion protein. Responsible for penetration of the virus into the cell cytoplasm by mediating the fusion of the membrane of the endocytosed virus particle with the endosomal membrane. Low pH in endosomes induces an irreversible conformational change in HA2, releasing the fusion hydrophobic peptide. Several trimers are required to form a competent fusion pore.</text>
</comment>
<comment type="subunit">
    <text evidence="1">Homotrimer of disulfide-linked HA1-HA2.</text>
</comment>
<comment type="subcellular location">
    <subcellularLocation>
        <location evidence="1">Virion membrane</location>
        <topology evidence="1">Single-pass type I membrane protein</topology>
    </subcellularLocation>
    <subcellularLocation>
        <location evidence="1">Host apical cell membrane</location>
        <topology evidence="1">Single-pass type I membrane protein</topology>
    </subcellularLocation>
    <text evidence="1">Targeted to the apical plasma membrane in epithelial polarized cells through a signal present in the transmembrane domain. Associated with glycosphingolipid- and cholesterol-enriched detergent-resistant lipid rafts.</text>
</comment>
<comment type="PTM">
    <text evidence="1">Palmitoylated.</text>
</comment>
<comment type="PTM">
    <text evidence="1">In natural infection, inactive HA is matured into HA1 and HA2 outside the cell by one or more trypsin-like, arginine-specific endoprotease secreted by the bronchial epithelial cells. One identified protease that may be involved in this process is secreted in lungs by club cells.</text>
</comment>
<comment type="miscellaneous">
    <text>Major glycoprotein, comprises over 80% of the envelope proteins present in virus particle.</text>
</comment>
<comment type="miscellaneous">
    <text>The extent of infection into host organism is determined by HA. Influenza viruses bud from the apical surface of polarized epithelial cells (e.g. bronchial epithelial cells) into lumen of lungs and are therefore usually pneumotropic. The reason is that HA is cleaved by tryptase clara which is restricted to lungs. However, HAs of H5 and H7 pantropic avian viruses subtypes can be cleaved by furin and subtilisin-type enzymes, allowing the virus to grow in other organs than lungs.</text>
</comment>
<comment type="miscellaneous">
    <text evidence="2">The influenza A genome consist of 8 RNA segments. Genetic variation of hemagglutinin and/or neuraminidase genes results in the emergence of new influenza strains. The mechanism of variation can be the result of point mutations or the result of genetic reassortment between segments of two different strains.</text>
</comment>
<comment type="similarity">
    <text evidence="1">Belongs to the influenza viruses hemagglutinin family.</text>
</comment>
<gene>
    <name evidence="1" type="primary">HA</name>
</gene>
<protein>
    <recommendedName>
        <fullName evidence="1">Hemagglutinin</fullName>
    </recommendedName>
    <component>
        <recommendedName>
            <fullName evidence="1">Hemagglutinin HA1 chain</fullName>
        </recommendedName>
    </component>
    <component>
        <recommendedName>
            <fullName evidence="1">Hemagglutinin HA2 chain</fullName>
        </recommendedName>
    </component>
</protein>
<organismHost>
    <name type="scientific">Aves</name>
    <dbReference type="NCBI Taxonomy" id="8782"/>
</organismHost>
<organismHost>
    <name type="scientific">Cetacea</name>
    <name type="common">whales</name>
    <dbReference type="NCBI Taxonomy" id="9721"/>
</organismHost>
<organismHost>
    <name type="scientific">Homo sapiens</name>
    <name type="common">Human</name>
    <dbReference type="NCBI Taxonomy" id="9606"/>
</organismHost>
<organismHost>
    <name type="scientific">Phocidae</name>
    <name type="common">true seals</name>
    <dbReference type="NCBI Taxonomy" id="9709"/>
</organismHost>
<organismHost>
    <name type="scientific">Sus scrofa</name>
    <name type="common">Pig</name>
    <dbReference type="NCBI Taxonomy" id="9823"/>
</organismHost>
<feature type="signal peptide" evidence="1">
    <location>
        <begin position="1"/>
        <end position="16"/>
    </location>
</feature>
<feature type="chain" id="PRO_0000440419" description="Hemagglutinin" evidence="1">
    <location>
        <begin position="17"/>
        <end position="566"/>
    </location>
</feature>
<feature type="chain" id="PRO_0000039024" description="Hemagglutinin HA1 chain">
    <location>
        <begin position="17"/>
        <end position="344"/>
    </location>
</feature>
<feature type="chain" id="PRO_0000039025" description="Hemagglutinin HA2 chain" evidence="1">
    <location>
        <begin position="346"/>
        <end position="566"/>
    </location>
</feature>
<feature type="topological domain" description="Extracellular" evidence="1">
    <location>
        <begin position="17"/>
        <end position="530"/>
    </location>
</feature>
<feature type="transmembrane region" description="Helical" evidence="1">
    <location>
        <begin position="531"/>
        <end position="551"/>
    </location>
</feature>
<feature type="topological domain" description="Cytoplasmic" evidence="1">
    <location>
        <begin position="552"/>
        <end position="566"/>
    </location>
</feature>
<feature type="site" description="Cleavage; by host" evidence="1">
    <location>
        <begin position="345"/>
        <end position="346"/>
    </location>
</feature>
<feature type="lipid moiety-binding region" description="S-palmitoyl cysteine; by host" evidence="1">
    <location>
        <position position="555"/>
    </location>
</feature>
<feature type="lipid moiety-binding region" description="S-palmitoyl cysteine; by host" evidence="1">
    <location>
        <position position="562"/>
    </location>
</feature>
<feature type="lipid moiety-binding region" description="S-palmitoyl cysteine; by host" evidence="1">
    <location>
        <position position="565"/>
    </location>
</feature>
<feature type="glycosylation site" description="N-linked (GlcNAc...) asparagine; by host" evidence="1">
    <location>
        <position position="24"/>
    </location>
</feature>
<feature type="glycosylation site" description="N-linked (GlcNAc...) asparagine; by host" evidence="1">
    <location>
        <position position="38"/>
    </location>
</feature>
<feature type="glycosylation site" description="N-linked (GlcNAc...) asparagine; by host" evidence="1">
    <location>
        <position position="54"/>
    </location>
</feature>
<feature type="glycosylation site" description="N-linked (GlcNAc...) asparagine; by host" evidence="1">
    <location>
        <position position="97"/>
    </location>
</feature>
<feature type="glycosylation site" description="N-linked (GlcNAc...) asparagine; by host" evidence="1">
    <location>
        <position position="181"/>
    </location>
</feature>
<feature type="glycosylation site" description="N-linked (GlcNAc...) asparagine; by host" evidence="1">
    <location>
        <position position="301"/>
    </location>
</feature>
<feature type="glycosylation site" description="N-linked (GlcNAc...) asparagine; by host" evidence="1">
    <location>
        <position position="499"/>
    </location>
</feature>
<feature type="disulfide bond" description="Interchain (between HA1 and HA2 chains)" evidence="1">
    <location>
        <begin position="30"/>
        <end position="482"/>
    </location>
</feature>
<feature type="disulfide bond" evidence="1">
    <location>
        <begin position="68"/>
        <end position="293"/>
    </location>
</feature>
<feature type="disulfide bond" evidence="1">
    <location>
        <begin position="80"/>
        <end position="92"/>
    </location>
</feature>
<feature type="disulfide bond" evidence="1">
    <location>
        <begin position="113"/>
        <end position="155"/>
    </location>
</feature>
<feature type="disulfide bond" evidence="1">
    <location>
        <begin position="297"/>
        <end position="321"/>
    </location>
</feature>
<feature type="disulfide bond" evidence="1">
    <location>
        <begin position="489"/>
        <end position="493"/>
    </location>
</feature>
<feature type="sequence conflict" description="In Ref. 1; AAA43187." evidence="2" ref="1">
    <original>G</original>
    <variation>A</variation>
    <location>
        <position position="265"/>
    </location>
</feature>
<feature type="sequence conflict" description="In Ref. 1; AAA43187." evidence="2" ref="1">
    <original>G</original>
    <variation>R</variation>
    <location>
        <position position="335"/>
    </location>
</feature>
<feature type="sequence conflict" description="In Ref. 1; AAA43187." evidence="2" ref="1">
    <original>H</original>
    <variation>D</variation>
    <location>
        <position position="487"/>
    </location>
</feature>
<organism>
    <name type="scientific">Influenza A virus (strain A/Memphis/1/1971 H3N2)</name>
    <dbReference type="NCBI Taxonomy" id="383586"/>
    <lineage>
        <taxon>Viruses</taxon>
        <taxon>Riboviria</taxon>
        <taxon>Orthornavirae</taxon>
        <taxon>Negarnaviricota</taxon>
        <taxon>Polyploviricotina</taxon>
        <taxon>Insthoviricetes</taxon>
        <taxon>Articulavirales</taxon>
        <taxon>Orthomyxoviridae</taxon>
        <taxon>Alphainfluenzavirus</taxon>
        <taxon>Alphainfluenzavirus influenzae</taxon>
        <taxon>Influenza A virus</taxon>
    </lineage>
</organism>
<reference key="1">
    <citation type="journal article" date="1983" name="Virology">
        <title>Sequence of the hemagglutinin gene of influenza virus A/Memphis/1/71 and previously uncharacterized monoclonal antibody-derived variants.</title>
        <authorList>
            <person name="Newton S.E."/>
            <person name="Air G.M."/>
            <person name="Webster R.G."/>
            <person name="Laver W.G."/>
        </authorList>
    </citation>
    <scope>NUCLEOTIDE SEQUENCE [GENOMIC RNA]</scope>
</reference>
<reference key="2">
    <citation type="submission" date="2005-08" db="EMBL/GenBank/DDBJ databases">
        <title>The NIAID influenza genome sequencing project.</title>
        <authorList>
            <person name="Ghedin E."/>
            <person name="Spiro D."/>
            <person name="Miller N."/>
            <person name="Zaborsky J."/>
            <person name="Feldblyum T."/>
            <person name="Subbu V."/>
            <person name="Shumway M."/>
            <person name="Sparenborg J."/>
            <person name="Groveman L."/>
            <person name="Halpin R."/>
            <person name="Sitz J."/>
            <person name="Koo H."/>
            <person name="Salzberg S.L."/>
            <person name="Webster R.G."/>
            <person name="Hoffmann E."/>
            <person name="Krauss S."/>
            <person name="Naeve C."/>
            <person name="Bao Y."/>
            <person name="Bolotov P."/>
            <person name="Dernovoy D."/>
            <person name="Kiryutin B."/>
            <person name="Lipman D.J."/>
            <person name="Tatusova T."/>
        </authorList>
    </citation>
    <scope>NUCLEOTIDE SEQUENCE [GENOMIC RNA]</scope>
</reference>
<reference key="3">
    <citation type="journal article" date="1981" name="Proc. Natl. Acad. Sci. U.S.A.">
        <title>Sequence relationships among the hemagglutinin genes of 12 subtypes of influenza A virus.</title>
        <authorList>
            <person name="Air G.M."/>
        </authorList>
    </citation>
    <scope>NUCLEOTIDE SEQUENCE [GENOMIC RNA] OF 1-115</scope>
</reference>
<sequence>MKTIIALSHIFCLVLGQYLPGNDNSTATLCLGHHAVPNGTLVKTITNDQIEVTNATELVQSSSTGKICNNPHRILDGIDCTLIDALLGDPHCDGFQNETWDLFVERSKAFSNCYPYDVPDYASLRSLVASSGTLEFITEGFTWTGVTQNGGSNACKRGPGSGFFSRLNWLTKSESTYPVLNVTMPNNDNFDKLYIWGVHHPSTNQEQTSLYVQASGRVTVSTRRSQQTIIPNIGSRPWVRGLSSRISIYWTIVKPGDVLVINSNGNLIAPRGYFKMRTGKSSIMRSDAPIDTCISECITPNGSIPNDKPFQNVNKITYGACPKYVKQNTLKLATGMRNVPEKQTRGLFGAIAGFIENGWEGMIDGWYGFRHQNSEGTGQAADLKSTQAAIDQINGKLNRVIEKTNEKFHQIEKEFSEVEGRIQDLEKYVEDTKIDLWSYNAELLVALENQHTIDLTDSEMNKLFEKTRRQLRENAEDMGNGCFKIYHKCDNACIESIRNGTYDHDVYRDEALNNRFQIKGVELKSGYKDWILWISFAISCFLLCVVLLGFIMWACQRGNIRCNICI</sequence>